<reference key="1">
    <citation type="submission" date="2005-03" db="EMBL/GenBank/DDBJ databases">
        <title>Comparison of the complete genome sequences of Rhodococcus erythropolis PR4 and Rhodococcus opacus B4.</title>
        <authorList>
            <person name="Takarada H."/>
            <person name="Sekine M."/>
            <person name="Hosoyama A."/>
            <person name="Yamada R."/>
            <person name="Fujisawa T."/>
            <person name="Omata S."/>
            <person name="Shimizu A."/>
            <person name="Tsukatani N."/>
            <person name="Tanikawa S."/>
            <person name="Fujita N."/>
            <person name="Harayama S."/>
        </authorList>
    </citation>
    <scope>NUCLEOTIDE SEQUENCE [LARGE SCALE GENOMIC DNA]</scope>
    <source>
        <strain>PR4 / NBRC 100887</strain>
    </source>
</reference>
<sequence length="250" mass="26805">MSGHSKWATTKHKKAVIDARRGKSFAKLIKNIEVAARTGGGDPTGNPTLYDAIQKAKKTSVPNDNIERARKRGAGEEAGGADWQTIMYEGYGPNGVAVLIECLTDNRNRAAGEVRTAMTRNGGNLADPGSVSYLFARKGVVTLEKNGQSEDDVLMAVLDAGAEEVTDLGETFEIVSEPQDLVAVRSALQEAGIDYDSAEADFRASVEVPLDVDGARKIFKLVDALEDSDDVQNVYTNIDLSDEVLAALED</sequence>
<gene>
    <name type="ordered locus">RER_29220</name>
</gene>
<name>Y2922_RHOE4</name>
<proteinExistence type="inferred from homology"/>
<keyword id="KW-0963">Cytoplasm</keyword>
<keyword id="KW-0238">DNA-binding</keyword>
<keyword id="KW-0804">Transcription</keyword>
<keyword id="KW-0805">Transcription regulation</keyword>
<accession>C0ZZ45</accession>
<comment type="subcellular location">
    <subcellularLocation>
        <location evidence="1">Cytoplasm</location>
    </subcellularLocation>
</comment>
<comment type="similarity">
    <text evidence="1">Belongs to the TACO1 family.</text>
</comment>
<feature type="chain" id="PRO_1000212618" description="Probable transcriptional regulatory protein RER_29220">
    <location>
        <begin position="1"/>
        <end position="250"/>
    </location>
</feature>
<organism>
    <name type="scientific">Rhodococcus erythropolis (strain PR4 / NBRC 100887)</name>
    <dbReference type="NCBI Taxonomy" id="234621"/>
    <lineage>
        <taxon>Bacteria</taxon>
        <taxon>Bacillati</taxon>
        <taxon>Actinomycetota</taxon>
        <taxon>Actinomycetes</taxon>
        <taxon>Mycobacteriales</taxon>
        <taxon>Nocardiaceae</taxon>
        <taxon>Rhodococcus</taxon>
        <taxon>Rhodococcus erythropolis group</taxon>
    </lineage>
</organism>
<protein>
    <recommendedName>
        <fullName evidence="1">Probable transcriptional regulatory protein RER_29220</fullName>
    </recommendedName>
</protein>
<evidence type="ECO:0000255" key="1">
    <source>
        <dbReference type="HAMAP-Rule" id="MF_00693"/>
    </source>
</evidence>
<dbReference type="EMBL" id="AP008957">
    <property type="protein sequence ID" value="BAH33630.1"/>
    <property type="molecule type" value="Genomic_DNA"/>
</dbReference>
<dbReference type="RefSeq" id="WP_007732951.1">
    <property type="nucleotide sequence ID" value="NC_012490.1"/>
</dbReference>
<dbReference type="SMR" id="C0ZZ45"/>
<dbReference type="KEGG" id="rer:RER_29220"/>
<dbReference type="eggNOG" id="COG0217">
    <property type="taxonomic scope" value="Bacteria"/>
</dbReference>
<dbReference type="HOGENOM" id="CLU_062974_2_2_11"/>
<dbReference type="Proteomes" id="UP000002204">
    <property type="component" value="Chromosome"/>
</dbReference>
<dbReference type="GO" id="GO:0005829">
    <property type="term" value="C:cytosol"/>
    <property type="evidence" value="ECO:0007669"/>
    <property type="project" value="TreeGrafter"/>
</dbReference>
<dbReference type="GO" id="GO:0003677">
    <property type="term" value="F:DNA binding"/>
    <property type="evidence" value="ECO:0007669"/>
    <property type="project" value="UniProtKB-UniRule"/>
</dbReference>
<dbReference type="GO" id="GO:0006355">
    <property type="term" value="P:regulation of DNA-templated transcription"/>
    <property type="evidence" value="ECO:0007669"/>
    <property type="project" value="UniProtKB-UniRule"/>
</dbReference>
<dbReference type="FunFam" id="1.10.10.200:FF:000002">
    <property type="entry name" value="Probable transcriptional regulatory protein CLM62_37755"/>
    <property type="match status" value="1"/>
</dbReference>
<dbReference type="Gene3D" id="1.10.10.200">
    <property type="match status" value="1"/>
</dbReference>
<dbReference type="Gene3D" id="3.30.70.980">
    <property type="match status" value="2"/>
</dbReference>
<dbReference type="HAMAP" id="MF_00693">
    <property type="entry name" value="Transcrip_reg_TACO1"/>
    <property type="match status" value="1"/>
</dbReference>
<dbReference type="InterPro" id="IPR017856">
    <property type="entry name" value="Integrase-like_N"/>
</dbReference>
<dbReference type="InterPro" id="IPR048300">
    <property type="entry name" value="TACO1_YebC-like_2nd/3rd_dom"/>
</dbReference>
<dbReference type="InterPro" id="IPR049083">
    <property type="entry name" value="TACO1_YebC_N"/>
</dbReference>
<dbReference type="InterPro" id="IPR002876">
    <property type="entry name" value="Transcrip_reg_TACO1-like"/>
</dbReference>
<dbReference type="InterPro" id="IPR026564">
    <property type="entry name" value="Transcrip_reg_TACO1-like_dom3"/>
</dbReference>
<dbReference type="InterPro" id="IPR029072">
    <property type="entry name" value="YebC-like"/>
</dbReference>
<dbReference type="NCBIfam" id="NF001030">
    <property type="entry name" value="PRK00110.1"/>
    <property type="match status" value="1"/>
</dbReference>
<dbReference type="NCBIfam" id="NF009044">
    <property type="entry name" value="PRK12378.1"/>
    <property type="match status" value="1"/>
</dbReference>
<dbReference type="NCBIfam" id="TIGR01033">
    <property type="entry name" value="YebC/PmpR family DNA-binding transcriptional regulator"/>
    <property type="match status" value="1"/>
</dbReference>
<dbReference type="PANTHER" id="PTHR12532:SF6">
    <property type="entry name" value="TRANSCRIPTIONAL REGULATORY PROTEIN YEBC-RELATED"/>
    <property type="match status" value="1"/>
</dbReference>
<dbReference type="PANTHER" id="PTHR12532">
    <property type="entry name" value="TRANSLATIONAL ACTIVATOR OF CYTOCHROME C OXIDASE 1"/>
    <property type="match status" value="1"/>
</dbReference>
<dbReference type="Pfam" id="PF20772">
    <property type="entry name" value="TACO1_YebC_N"/>
    <property type="match status" value="1"/>
</dbReference>
<dbReference type="Pfam" id="PF01709">
    <property type="entry name" value="Transcrip_reg"/>
    <property type="match status" value="1"/>
</dbReference>
<dbReference type="SUPFAM" id="SSF75625">
    <property type="entry name" value="YebC-like"/>
    <property type="match status" value="1"/>
</dbReference>